<organism>
    <name type="scientific">Francisella tularensis subsp. tularensis (strain SCHU S4 / Schu 4)</name>
    <dbReference type="NCBI Taxonomy" id="177416"/>
    <lineage>
        <taxon>Bacteria</taxon>
        <taxon>Pseudomonadati</taxon>
        <taxon>Pseudomonadota</taxon>
        <taxon>Gammaproteobacteria</taxon>
        <taxon>Thiotrichales</taxon>
        <taxon>Francisellaceae</taxon>
        <taxon>Francisella</taxon>
    </lineage>
</organism>
<sequence length="51" mass="6141">MREKIRLVSSAKTGHFYTTTKNKKEMPNKMEIKKYDPVVRKHVMYKEAKIK</sequence>
<feature type="chain" id="PRO_0000356467" description="Large ribosomal subunit protein bL33">
    <location>
        <begin position="1"/>
        <end position="51"/>
    </location>
</feature>
<comment type="similarity">
    <text evidence="1">Belongs to the bacterial ribosomal protein bL33 family.</text>
</comment>
<accession>Q5NEM2</accession>
<evidence type="ECO:0000255" key="1">
    <source>
        <dbReference type="HAMAP-Rule" id="MF_00294"/>
    </source>
</evidence>
<evidence type="ECO:0000305" key="2"/>
<protein>
    <recommendedName>
        <fullName evidence="1">Large ribosomal subunit protein bL33</fullName>
    </recommendedName>
    <alternativeName>
        <fullName evidence="2">50S ribosomal protein L33</fullName>
    </alternativeName>
</protein>
<gene>
    <name evidence="1" type="primary">rpmG</name>
    <name type="ordered locus">FTT_1604</name>
</gene>
<dbReference type="EMBL" id="AJ749949">
    <property type="protein sequence ID" value="CAG46237.1"/>
    <property type="molecule type" value="Genomic_DNA"/>
</dbReference>
<dbReference type="RefSeq" id="WP_003014820.1">
    <property type="nucleotide sequence ID" value="NZ_CP010290.1"/>
</dbReference>
<dbReference type="RefSeq" id="YP_170520.1">
    <property type="nucleotide sequence ID" value="NC_006570.2"/>
</dbReference>
<dbReference type="SMR" id="Q5NEM2"/>
<dbReference type="STRING" id="177416.FTT_1604"/>
<dbReference type="DNASU" id="3191989"/>
<dbReference type="EnsemblBacteria" id="CAG46237">
    <property type="protein sequence ID" value="CAG46237"/>
    <property type="gene ID" value="FTT_1604"/>
</dbReference>
<dbReference type="GeneID" id="75264166"/>
<dbReference type="KEGG" id="ftu:FTT_1604"/>
<dbReference type="eggNOG" id="COG0267">
    <property type="taxonomic scope" value="Bacteria"/>
</dbReference>
<dbReference type="OrthoDB" id="21586at2"/>
<dbReference type="Proteomes" id="UP000001174">
    <property type="component" value="Chromosome"/>
</dbReference>
<dbReference type="GO" id="GO:0022625">
    <property type="term" value="C:cytosolic large ribosomal subunit"/>
    <property type="evidence" value="ECO:0007669"/>
    <property type="project" value="TreeGrafter"/>
</dbReference>
<dbReference type="GO" id="GO:0003735">
    <property type="term" value="F:structural constituent of ribosome"/>
    <property type="evidence" value="ECO:0007669"/>
    <property type="project" value="InterPro"/>
</dbReference>
<dbReference type="GO" id="GO:0006412">
    <property type="term" value="P:translation"/>
    <property type="evidence" value="ECO:0007669"/>
    <property type="project" value="UniProtKB-UniRule"/>
</dbReference>
<dbReference type="FunFam" id="2.20.28.120:FF:000001">
    <property type="entry name" value="50S ribosomal protein L33"/>
    <property type="match status" value="1"/>
</dbReference>
<dbReference type="Gene3D" id="2.20.28.120">
    <property type="entry name" value="Ribosomal protein L33"/>
    <property type="match status" value="1"/>
</dbReference>
<dbReference type="HAMAP" id="MF_00294">
    <property type="entry name" value="Ribosomal_bL33"/>
    <property type="match status" value="1"/>
</dbReference>
<dbReference type="InterPro" id="IPR001705">
    <property type="entry name" value="Ribosomal_bL33"/>
</dbReference>
<dbReference type="InterPro" id="IPR018264">
    <property type="entry name" value="Ribosomal_bL33_CS"/>
</dbReference>
<dbReference type="InterPro" id="IPR038584">
    <property type="entry name" value="Ribosomal_bL33_sf"/>
</dbReference>
<dbReference type="InterPro" id="IPR011332">
    <property type="entry name" value="Ribosomal_zn-bd"/>
</dbReference>
<dbReference type="NCBIfam" id="NF001860">
    <property type="entry name" value="PRK00595.1"/>
    <property type="match status" value="1"/>
</dbReference>
<dbReference type="NCBIfam" id="TIGR01023">
    <property type="entry name" value="rpmG_bact"/>
    <property type="match status" value="1"/>
</dbReference>
<dbReference type="PANTHER" id="PTHR15238">
    <property type="entry name" value="54S RIBOSOMAL PROTEIN L39, MITOCHONDRIAL"/>
    <property type="match status" value="1"/>
</dbReference>
<dbReference type="PANTHER" id="PTHR15238:SF1">
    <property type="entry name" value="LARGE RIBOSOMAL SUBUNIT PROTEIN BL33M"/>
    <property type="match status" value="1"/>
</dbReference>
<dbReference type="Pfam" id="PF00471">
    <property type="entry name" value="Ribosomal_L33"/>
    <property type="match status" value="1"/>
</dbReference>
<dbReference type="SUPFAM" id="SSF57829">
    <property type="entry name" value="Zn-binding ribosomal proteins"/>
    <property type="match status" value="1"/>
</dbReference>
<dbReference type="PROSITE" id="PS00582">
    <property type="entry name" value="RIBOSOMAL_L33"/>
    <property type="match status" value="1"/>
</dbReference>
<name>RL33_FRATT</name>
<proteinExistence type="inferred from homology"/>
<reference key="1">
    <citation type="journal article" date="2005" name="Nat. Genet.">
        <title>The complete genome sequence of Francisella tularensis, the causative agent of tularemia.</title>
        <authorList>
            <person name="Larsson P."/>
            <person name="Oyston P.C.F."/>
            <person name="Chain P."/>
            <person name="Chu M.C."/>
            <person name="Duffield M."/>
            <person name="Fuxelius H.-H."/>
            <person name="Garcia E."/>
            <person name="Haelltorp G."/>
            <person name="Johansson D."/>
            <person name="Isherwood K.E."/>
            <person name="Karp P.D."/>
            <person name="Larsson E."/>
            <person name="Liu Y."/>
            <person name="Michell S."/>
            <person name="Prior J."/>
            <person name="Prior R."/>
            <person name="Malfatti S."/>
            <person name="Sjoestedt A."/>
            <person name="Svensson K."/>
            <person name="Thompson N."/>
            <person name="Vergez L."/>
            <person name="Wagg J.K."/>
            <person name="Wren B.W."/>
            <person name="Lindler L.E."/>
            <person name="Andersson S.G.E."/>
            <person name="Forsman M."/>
            <person name="Titball R.W."/>
        </authorList>
    </citation>
    <scope>NUCLEOTIDE SEQUENCE [LARGE SCALE GENOMIC DNA]</scope>
    <source>
        <strain>SCHU S4 / Schu 4</strain>
    </source>
</reference>
<keyword id="KW-1185">Reference proteome</keyword>
<keyword id="KW-0687">Ribonucleoprotein</keyword>
<keyword id="KW-0689">Ribosomal protein</keyword>